<comment type="subcellular location">
    <subcellularLocation>
        <location evidence="3">Membrane</location>
        <topology evidence="3">Single-pass membrane protein</topology>
    </subcellularLocation>
</comment>
<comment type="miscellaneous">
    <text evidence="3">Completely overlaps YRF1-2.</text>
</comment>
<comment type="caution">
    <text evidence="4">Product of a dubious gene prediction unlikely to encode a functional protein. Because of that it is not part of the S.cerevisiae S288c complete/reference proteome set.</text>
</comment>
<name>YER90_YEAST</name>
<evidence type="ECO:0000255" key="1"/>
<evidence type="ECO:0000256" key="2">
    <source>
        <dbReference type="SAM" id="MobiDB-lite"/>
    </source>
</evidence>
<evidence type="ECO:0000305" key="3"/>
<evidence type="ECO:0000305" key="4">
    <source>
    </source>
</evidence>
<accession>P0CL27</accession>
<accession>Q8TFA6</accession>
<protein>
    <recommendedName>
        <fullName>Putative uncharacterized protein YER190C-A</fullName>
    </recommendedName>
</protein>
<organism>
    <name type="scientific">Saccharomyces cerevisiae (strain ATCC 204508 / S288c)</name>
    <name type="common">Baker's yeast</name>
    <dbReference type="NCBI Taxonomy" id="559292"/>
    <lineage>
        <taxon>Eukaryota</taxon>
        <taxon>Fungi</taxon>
        <taxon>Dikarya</taxon>
        <taxon>Ascomycota</taxon>
        <taxon>Saccharomycotina</taxon>
        <taxon>Saccharomycetes</taxon>
        <taxon>Saccharomycetales</taxon>
        <taxon>Saccharomycetaceae</taxon>
        <taxon>Saccharomyces</taxon>
    </lineage>
</organism>
<sequence length="191" mass="17367">MESIILSIAIFIGVLLGTSVGTFSGSGISAGVGASSGSGISAGVGASSGSSTSVGVGTFGGSSTSVGVGTFGGSSTSVGVGTFSGSRTSPDVDAGSGSSTSPDVGAGSGSSISAGVGTFSGSRTSPDVDAGSGSSTSPDVGAGSGSSISAGVGSRIGTGISTTMNARVAVLITAAILSAPVTAIALLEARR</sequence>
<dbReference type="EMBL" id="U18922">
    <property type="status" value="NOT_ANNOTATED_CDS"/>
    <property type="molecule type" value="Genomic_DNA"/>
</dbReference>
<dbReference type="EMBL" id="AF479947">
    <property type="protein sequence ID" value="AAL79260.1"/>
    <property type="molecule type" value="Genomic_DNA"/>
</dbReference>
<dbReference type="STRING" id="4932.YER190C-A"/>
<dbReference type="PaxDb" id="4932-YER190C-A"/>
<dbReference type="EnsemblFungi" id="YER190C-A_mRNA">
    <property type="protein sequence ID" value="YER190C-A"/>
    <property type="gene ID" value="YER190C-A"/>
</dbReference>
<dbReference type="EnsemblFungi" id="YGR296C-A_mRNA">
    <property type="protein sequence ID" value="YGR296C-A"/>
    <property type="gene ID" value="YGR296C-A"/>
</dbReference>
<dbReference type="EnsemblFungi" id="YML133W-A_mRNA">
    <property type="protein sequence ID" value="YML133W-A"/>
    <property type="gene ID" value="YML133W-A"/>
</dbReference>
<dbReference type="EnsemblFungi" id="YNL339W-A_mRNA">
    <property type="protein sequence ID" value="YNL339W-A"/>
    <property type="gene ID" value="YNL339W-A"/>
</dbReference>
<dbReference type="EnsemblFungi" id="YPL283W-A_mRNA">
    <property type="protein sequence ID" value="YPL283W-A"/>
    <property type="gene ID" value="YPL283W-A"/>
</dbReference>
<dbReference type="AGR" id="SGD:S000028626"/>
<dbReference type="SGD" id="S000028626">
    <property type="gene designation" value="YER190C-A"/>
</dbReference>
<dbReference type="HOGENOM" id="CLU_106419_0_0_1"/>
<dbReference type="OMA" id="CAHGATM"/>
<dbReference type="GO" id="GO:0016020">
    <property type="term" value="C:membrane"/>
    <property type="evidence" value="ECO:0007669"/>
    <property type="project" value="UniProtKB-SubCell"/>
</dbReference>
<keyword id="KW-0472">Membrane</keyword>
<keyword id="KW-0732">Signal</keyword>
<keyword id="KW-0812">Transmembrane</keyword>
<keyword id="KW-1133">Transmembrane helix</keyword>
<reference key="1">
    <citation type="journal article" date="1997" name="Nature">
        <title>The nucleotide sequence of Saccharomyces cerevisiae chromosome V.</title>
        <authorList>
            <person name="Dietrich F.S."/>
            <person name="Mulligan J.T."/>
            <person name="Hennessy K.M."/>
            <person name="Yelton M.A."/>
            <person name="Allen E."/>
            <person name="Araujo R."/>
            <person name="Aviles E."/>
            <person name="Berno A."/>
            <person name="Brennan T."/>
            <person name="Carpenter J."/>
            <person name="Chen E."/>
            <person name="Cherry J.M."/>
            <person name="Chung E."/>
            <person name="Duncan M."/>
            <person name="Guzman E."/>
            <person name="Hartzell G."/>
            <person name="Hunicke-Smith S."/>
            <person name="Hyman R.W."/>
            <person name="Kayser A."/>
            <person name="Komp C."/>
            <person name="Lashkari D."/>
            <person name="Lew H."/>
            <person name="Lin D."/>
            <person name="Mosedale D."/>
            <person name="Nakahara K."/>
            <person name="Namath A."/>
            <person name="Norgren R."/>
            <person name="Oefner P."/>
            <person name="Oh C."/>
            <person name="Petel F.X."/>
            <person name="Roberts D."/>
            <person name="Sehl P."/>
            <person name="Schramm S."/>
            <person name="Shogren T."/>
            <person name="Smith V."/>
            <person name="Taylor P."/>
            <person name="Wei Y."/>
            <person name="Botstein D."/>
            <person name="Davis R.W."/>
        </authorList>
    </citation>
    <scope>NUCLEOTIDE SEQUENCE [LARGE SCALE GENOMIC DNA]</scope>
    <source>
        <strain>ATCC 204508 / S288c</strain>
    </source>
</reference>
<reference key="2">
    <citation type="journal article" date="2014" name="G3 (Bethesda)">
        <title>The reference genome sequence of Saccharomyces cerevisiae: Then and now.</title>
        <authorList>
            <person name="Engel S.R."/>
            <person name="Dietrich F.S."/>
            <person name="Fisk D.G."/>
            <person name="Binkley G."/>
            <person name="Balakrishnan R."/>
            <person name="Costanzo M.C."/>
            <person name="Dwight S.S."/>
            <person name="Hitz B.C."/>
            <person name="Karra K."/>
            <person name="Nash R.S."/>
            <person name="Weng S."/>
            <person name="Wong E.D."/>
            <person name="Lloyd P."/>
            <person name="Skrzypek M.S."/>
            <person name="Miyasato S.R."/>
            <person name="Simison M."/>
            <person name="Cherry J.M."/>
        </authorList>
    </citation>
    <scope>GENOME REANNOTATION</scope>
    <source>
        <strain>ATCC 204508 / S288c</strain>
    </source>
</reference>
<reference key="3">
    <citation type="journal article" date="2002" name="Nat. Biotechnol.">
        <title>An integrated approach for finding overlooked genes in yeast.</title>
        <authorList>
            <person name="Kumar A."/>
            <person name="Harrison P.M."/>
            <person name="Cheung K.-H."/>
            <person name="Lan N."/>
            <person name="Echols N."/>
            <person name="Bertone P."/>
            <person name="Miller P."/>
            <person name="Gerstein M.B."/>
            <person name="Snyder M."/>
        </authorList>
    </citation>
    <scope>NUCLEOTIDE SEQUENCE [GENOMIC DNA]</scope>
</reference>
<gene>
    <name type="ordered locus">YER190C-A</name>
</gene>
<feature type="signal peptide" evidence="1">
    <location>
        <begin position="1"/>
        <end position="17"/>
    </location>
</feature>
<feature type="chain" id="PRO_0000299916" description="Putative uncharacterized protein YER190C-A">
    <location>
        <begin position="18"/>
        <end position="191"/>
    </location>
</feature>
<feature type="transmembrane region" description="Helical" evidence="1">
    <location>
        <begin position="168"/>
        <end position="188"/>
    </location>
</feature>
<feature type="region of interest" description="Disordered" evidence="2">
    <location>
        <begin position="82"/>
        <end position="148"/>
    </location>
</feature>
<proteinExistence type="uncertain"/>